<comment type="function">
    <text evidence="1">Produces ATP from ADP in the presence of a proton gradient across the membrane.</text>
</comment>
<comment type="subunit">
    <text evidence="1">F-type ATPases have 2 components, CF(1) - the catalytic core - and CF(0) - the membrane proton channel. CF(1) has five subunits: alpha(3), beta(3), gamma(1), delta(1), epsilon(1). CF(0) has three main subunits: a, b and c.</text>
</comment>
<comment type="subcellular location">
    <subcellularLocation>
        <location evidence="1">Cell membrane</location>
        <topology evidence="1">Peripheral membrane protein</topology>
    </subcellularLocation>
</comment>
<comment type="similarity">
    <text evidence="1">Belongs to the ATPase epsilon chain family.</text>
</comment>
<proteinExistence type="inferred from homology"/>
<accession>A8FIB1</accession>
<dbReference type="EMBL" id="CP000813">
    <property type="protein sequence ID" value="ABV63978.1"/>
    <property type="molecule type" value="Genomic_DNA"/>
</dbReference>
<dbReference type="RefSeq" id="WP_003214592.1">
    <property type="nucleotide sequence ID" value="NZ_VEIS01000002.1"/>
</dbReference>
<dbReference type="SMR" id="A8FIB1"/>
<dbReference type="STRING" id="315750.BPUM_3325"/>
<dbReference type="KEGG" id="bpu:BPUM_3325"/>
<dbReference type="eggNOG" id="COG0355">
    <property type="taxonomic scope" value="Bacteria"/>
</dbReference>
<dbReference type="HOGENOM" id="CLU_084338_1_2_9"/>
<dbReference type="OrthoDB" id="9804110at2"/>
<dbReference type="Proteomes" id="UP000001355">
    <property type="component" value="Chromosome"/>
</dbReference>
<dbReference type="GO" id="GO:0005886">
    <property type="term" value="C:plasma membrane"/>
    <property type="evidence" value="ECO:0007669"/>
    <property type="project" value="UniProtKB-SubCell"/>
</dbReference>
<dbReference type="GO" id="GO:0045259">
    <property type="term" value="C:proton-transporting ATP synthase complex"/>
    <property type="evidence" value="ECO:0007669"/>
    <property type="project" value="UniProtKB-KW"/>
</dbReference>
<dbReference type="GO" id="GO:0005524">
    <property type="term" value="F:ATP binding"/>
    <property type="evidence" value="ECO:0007669"/>
    <property type="project" value="UniProtKB-UniRule"/>
</dbReference>
<dbReference type="GO" id="GO:0046933">
    <property type="term" value="F:proton-transporting ATP synthase activity, rotational mechanism"/>
    <property type="evidence" value="ECO:0007669"/>
    <property type="project" value="UniProtKB-UniRule"/>
</dbReference>
<dbReference type="CDD" id="cd12152">
    <property type="entry name" value="F1-ATPase_delta"/>
    <property type="match status" value="1"/>
</dbReference>
<dbReference type="FunFam" id="1.20.5.440:FF:000001">
    <property type="entry name" value="ATP synthase epsilon chain"/>
    <property type="match status" value="1"/>
</dbReference>
<dbReference type="FunFam" id="2.60.15.10:FF:000001">
    <property type="entry name" value="ATP synthase epsilon chain"/>
    <property type="match status" value="1"/>
</dbReference>
<dbReference type="Gene3D" id="1.20.5.440">
    <property type="entry name" value="ATP synthase delta/epsilon subunit, C-terminal domain"/>
    <property type="match status" value="1"/>
</dbReference>
<dbReference type="Gene3D" id="2.60.15.10">
    <property type="entry name" value="F0F1 ATP synthase delta/epsilon subunit, N-terminal"/>
    <property type="match status" value="1"/>
</dbReference>
<dbReference type="HAMAP" id="MF_00530">
    <property type="entry name" value="ATP_synth_epsil_bac"/>
    <property type="match status" value="1"/>
</dbReference>
<dbReference type="InterPro" id="IPR036794">
    <property type="entry name" value="ATP_F1_dsu/esu_C_sf"/>
</dbReference>
<dbReference type="InterPro" id="IPR001469">
    <property type="entry name" value="ATP_synth_F1_dsu/esu"/>
</dbReference>
<dbReference type="InterPro" id="IPR020546">
    <property type="entry name" value="ATP_synth_F1_dsu/esu_N"/>
</dbReference>
<dbReference type="InterPro" id="IPR020547">
    <property type="entry name" value="ATP_synth_F1_esu_C"/>
</dbReference>
<dbReference type="InterPro" id="IPR036771">
    <property type="entry name" value="ATPsynth_dsu/esu_N"/>
</dbReference>
<dbReference type="NCBIfam" id="TIGR01216">
    <property type="entry name" value="ATP_synt_epsi"/>
    <property type="match status" value="1"/>
</dbReference>
<dbReference type="NCBIfam" id="NF001846">
    <property type="entry name" value="PRK00571.1-3"/>
    <property type="match status" value="1"/>
</dbReference>
<dbReference type="NCBIfam" id="NF009980">
    <property type="entry name" value="PRK13446.1"/>
    <property type="match status" value="1"/>
</dbReference>
<dbReference type="PANTHER" id="PTHR13822">
    <property type="entry name" value="ATP SYNTHASE DELTA/EPSILON CHAIN"/>
    <property type="match status" value="1"/>
</dbReference>
<dbReference type="PANTHER" id="PTHR13822:SF10">
    <property type="entry name" value="ATP SYNTHASE EPSILON CHAIN, CHLOROPLASTIC"/>
    <property type="match status" value="1"/>
</dbReference>
<dbReference type="Pfam" id="PF00401">
    <property type="entry name" value="ATP-synt_DE"/>
    <property type="match status" value="1"/>
</dbReference>
<dbReference type="Pfam" id="PF02823">
    <property type="entry name" value="ATP-synt_DE_N"/>
    <property type="match status" value="1"/>
</dbReference>
<dbReference type="SUPFAM" id="SSF46604">
    <property type="entry name" value="Epsilon subunit of F1F0-ATP synthase C-terminal domain"/>
    <property type="match status" value="1"/>
</dbReference>
<dbReference type="SUPFAM" id="SSF51344">
    <property type="entry name" value="Epsilon subunit of F1F0-ATP synthase N-terminal domain"/>
    <property type="match status" value="1"/>
</dbReference>
<evidence type="ECO:0000255" key="1">
    <source>
        <dbReference type="HAMAP-Rule" id="MF_00530"/>
    </source>
</evidence>
<gene>
    <name evidence="1" type="primary">atpC</name>
    <name type="ordered locus">BPUM_3325</name>
</gene>
<sequence>MKTVQVNIVTPDGPVYQADVEMVSVRAESGELGILAGHVPMVAPLKIGAVRLKHSGSTELVAVSGGFVEVRPEQVTILAQAAETSDKVDVDRAKSAKQRAEEHLNHPNESDVRRAELALKRALNRLNVAGK</sequence>
<organism>
    <name type="scientific">Bacillus pumilus (strain SAFR-032)</name>
    <dbReference type="NCBI Taxonomy" id="315750"/>
    <lineage>
        <taxon>Bacteria</taxon>
        <taxon>Bacillati</taxon>
        <taxon>Bacillota</taxon>
        <taxon>Bacilli</taxon>
        <taxon>Bacillales</taxon>
        <taxon>Bacillaceae</taxon>
        <taxon>Bacillus</taxon>
    </lineage>
</organism>
<reference key="1">
    <citation type="journal article" date="2007" name="PLoS ONE">
        <title>Paradoxical DNA repair and peroxide resistance gene conservation in Bacillus pumilus SAFR-032.</title>
        <authorList>
            <person name="Gioia J."/>
            <person name="Yerrapragada S."/>
            <person name="Qin X."/>
            <person name="Jiang H."/>
            <person name="Igboeli O.C."/>
            <person name="Muzny D."/>
            <person name="Dugan-Rocha S."/>
            <person name="Ding Y."/>
            <person name="Hawes A."/>
            <person name="Liu W."/>
            <person name="Perez L."/>
            <person name="Kovar C."/>
            <person name="Dinh H."/>
            <person name="Lee S."/>
            <person name="Nazareth L."/>
            <person name="Blyth P."/>
            <person name="Holder M."/>
            <person name="Buhay C."/>
            <person name="Tirumalai M.R."/>
            <person name="Liu Y."/>
            <person name="Dasgupta I."/>
            <person name="Bokhetache L."/>
            <person name="Fujita M."/>
            <person name="Karouia F."/>
            <person name="Eswara Moorthy P."/>
            <person name="Siefert J."/>
            <person name="Uzman A."/>
            <person name="Buzumbo P."/>
            <person name="Verma A."/>
            <person name="Zwiya H."/>
            <person name="McWilliams B.D."/>
            <person name="Olowu A."/>
            <person name="Clinkenbeard K.D."/>
            <person name="Newcombe D."/>
            <person name="Golebiewski L."/>
            <person name="Petrosino J.F."/>
            <person name="Nicholson W.L."/>
            <person name="Fox G.E."/>
            <person name="Venkateswaran K."/>
            <person name="Highlander S.K."/>
            <person name="Weinstock G.M."/>
        </authorList>
    </citation>
    <scope>NUCLEOTIDE SEQUENCE [LARGE SCALE GENOMIC DNA]</scope>
    <source>
        <strain>SAFR-032</strain>
    </source>
</reference>
<keyword id="KW-0066">ATP synthesis</keyword>
<keyword id="KW-1003">Cell membrane</keyword>
<keyword id="KW-0139">CF(1)</keyword>
<keyword id="KW-0375">Hydrogen ion transport</keyword>
<keyword id="KW-0406">Ion transport</keyword>
<keyword id="KW-0472">Membrane</keyword>
<keyword id="KW-0813">Transport</keyword>
<feature type="chain" id="PRO_1000060977" description="ATP synthase epsilon chain">
    <location>
        <begin position="1"/>
        <end position="131"/>
    </location>
</feature>
<name>ATPE_BACP2</name>
<protein>
    <recommendedName>
        <fullName evidence="1">ATP synthase epsilon chain</fullName>
    </recommendedName>
    <alternativeName>
        <fullName evidence="1">ATP synthase F1 sector epsilon subunit</fullName>
    </alternativeName>
    <alternativeName>
        <fullName evidence="1">F-ATPase epsilon subunit</fullName>
    </alternativeName>
</protein>